<keyword id="KW-0963">Cytoplasm</keyword>
<keyword id="KW-0378">Hydrolase</keyword>
<keyword id="KW-0539">Nucleus</keyword>
<keyword id="KW-1185">Reference proteome</keyword>
<keyword id="KW-0823">Tryptophan catabolism</keyword>
<dbReference type="EC" id="3.5.1.9" evidence="1"/>
<dbReference type="EMBL" id="BT048246">
    <property type="protein sequence ID" value="ACI68047.1"/>
    <property type="molecule type" value="mRNA"/>
</dbReference>
<dbReference type="RefSeq" id="NP_001134570.1">
    <property type="nucleotide sequence ID" value="NM_001141098.3"/>
</dbReference>
<dbReference type="RefSeq" id="XP_014038735.1">
    <property type="nucleotide sequence ID" value="XM_014183260.2"/>
</dbReference>
<dbReference type="SMR" id="B5XB27"/>
<dbReference type="STRING" id="8030.ENSSSAP00000002061"/>
<dbReference type="ESTHER" id="salsa-afmid">
    <property type="family name" value="Kynurenine-formamidase"/>
</dbReference>
<dbReference type="PaxDb" id="8030-ENSSSAP00000002061"/>
<dbReference type="Ensembl" id="ENSSSAT00070023676">
    <property type="protein sequence ID" value="ENSSSAP00070022625"/>
    <property type="gene ID" value="ENSSSAG00070014816"/>
</dbReference>
<dbReference type="GeneID" id="100196069"/>
<dbReference type="KEGG" id="sasa:100196069"/>
<dbReference type="CTD" id="125061"/>
<dbReference type="UniPathway" id="UPA00333">
    <property type="reaction ID" value="UER00454"/>
</dbReference>
<dbReference type="Proteomes" id="UP000087266">
    <property type="component" value="Chromosome ssa02"/>
</dbReference>
<dbReference type="Bgee" id="ENSSSAG00000001106">
    <property type="expression patterns" value="Expressed in heart and 25 other cell types or tissues"/>
</dbReference>
<dbReference type="GO" id="GO:0005829">
    <property type="term" value="C:cytosol"/>
    <property type="evidence" value="ECO:0007669"/>
    <property type="project" value="UniProtKB-SubCell"/>
</dbReference>
<dbReference type="GO" id="GO:0005634">
    <property type="term" value="C:nucleus"/>
    <property type="evidence" value="ECO:0007669"/>
    <property type="project" value="UniProtKB-SubCell"/>
</dbReference>
<dbReference type="GO" id="GO:0004061">
    <property type="term" value="F:arylformamidase activity"/>
    <property type="evidence" value="ECO:0007669"/>
    <property type="project" value="UniProtKB-UniRule"/>
</dbReference>
<dbReference type="GO" id="GO:0034354">
    <property type="term" value="P:'de novo' NAD biosynthetic process from L-tryptophan"/>
    <property type="evidence" value="ECO:0007669"/>
    <property type="project" value="UniProtKB-UniRule"/>
</dbReference>
<dbReference type="GO" id="GO:0019441">
    <property type="term" value="P:L-tryptophan catabolic process to kynurenine"/>
    <property type="evidence" value="ECO:0007669"/>
    <property type="project" value="UniProtKB-UniRule"/>
</dbReference>
<dbReference type="FunFam" id="3.40.50.1820:FF:000134">
    <property type="entry name" value="Kynurenine formamidase"/>
    <property type="match status" value="1"/>
</dbReference>
<dbReference type="Gene3D" id="3.40.50.1820">
    <property type="entry name" value="alpha/beta hydrolase"/>
    <property type="match status" value="1"/>
</dbReference>
<dbReference type="HAMAP" id="MF_03014">
    <property type="entry name" value="KFase"/>
    <property type="match status" value="1"/>
</dbReference>
<dbReference type="InterPro" id="IPR029058">
    <property type="entry name" value="AB_hydrolase_fold"/>
</dbReference>
<dbReference type="InterPro" id="IPR049492">
    <property type="entry name" value="BD-FAE-like_dom"/>
</dbReference>
<dbReference type="InterPro" id="IPR050300">
    <property type="entry name" value="GDXG_lipolytic_enzyme"/>
</dbReference>
<dbReference type="InterPro" id="IPR027519">
    <property type="entry name" value="KFase_ver/fungi-typ"/>
</dbReference>
<dbReference type="PANTHER" id="PTHR48081">
    <property type="entry name" value="AB HYDROLASE SUPERFAMILY PROTEIN C4A8.06C"/>
    <property type="match status" value="1"/>
</dbReference>
<dbReference type="PANTHER" id="PTHR48081:SF33">
    <property type="entry name" value="KYNURENINE FORMAMIDASE"/>
    <property type="match status" value="1"/>
</dbReference>
<dbReference type="Pfam" id="PF20434">
    <property type="entry name" value="BD-FAE"/>
    <property type="match status" value="1"/>
</dbReference>
<dbReference type="SUPFAM" id="SSF53474">
    <property type="entry name" value="alpha/beta-Hydrolases"/>
    <property type="match status" value="1"/>
</dbReference>
<name>KFA_SALSA</name>
<sequence length="294" mass="32682">MSRWKDMNKDELERQFSPSQWSHRMSADDVIKSHVTALKEGTERARGLAQTLLNVPYGEGEGEKLDVYVPTTTSLDVPLVIYLHGGYWQFLSKEESGFMAVPLVHKGVVVVAVGYDIAPKGNMDVMVSQVRRSVVSVIQQYSHISGLYLCGHSAGAHLAAMILSTDWSQYSVTPQIKGAFLVSGIYDLLPILSTYVNEPLKMTEEVALRNSPSQLVPQLKLSSSNCDIVVAVAQNDSPEFRKQSEDYYKALESTEGLKVTLEDVPNTDHFNIIEQLVDGDYHLTQLLLKMMGKS</sequence>
<evidence type="ECO:0000255" key="1">
    <source>
        <dbReference type="HAMAP-Rule" id="MF_03014"/>
    </source>
</evidence>
<evidence type="ECO:0000256" key="2">
    <source>
        <dbReference type="SAM" id="MobiDB-lite"/>
    </source>
</evidence>
<gene>
    <name type="primary">afmid</name>
</gene>
<accession>B5XB27</accession>
<organism>
    <name type="scientific">Salmo salar</name>
    <name type="common">Atlantic salmon</name>
    <dbReference type="NCBI Taxonomy" id="8030"/>
    <lineage>
        <taxon>Eukaryota</taxon>
        <taxon>Metazoa</taxon>
        <taxon>Chordata</taxon>
        <taxon>Craniata</taxon>
        <taxon>Vertebrata</taxon>
        <taxon>Euteleostomi</taxon>
        <taxon>Actinopterygii</taxon>
        <taxon>Neopterygii</taxon>
        <taxon>Teleostei</taxon>
        <taxon>Protacanthopterygii</taxon>
        <taxon>Salmoniformes</taxon>
        <taxon>Salmonidae</taxon>
        <taxon>Salmoninae</taxon>
        <taxon>Salmo</taxon>
    </lineage>
</organism>
<feature type="chain" id="PRO_0000361879" description="Kynurenine formamidase">
    <location>
        <begin position="1"/>
        <end position="294"/>
    </location>
</feature>
<feature type="region of interest" description="Disordered" evidence="2">
    <location>
        <begin position="1"/>
        <end position="20"/>
    </location>
</feature>
<feature type="short sequence motif" description="HGGXW">
    <location>
        <begin position="84"/>
        <end position="88"/>
    </location>
</feature>
<feature type="compositionally biased region" description="Basic and acidic residues" evidence="2">
    <location>
        <begin position="1"/>
        <end position="14"/>
    </location>
</feature>
<feature type="active site" description="Nucleophile" evidence="1">
    <location>
        <position position="153"/>
    </location>
</feature>
<feature type="active site" evidence="1">
    <location>
        <position position="236"/>
    </location>
</feature>
<feature type="active site" evidence="1">
    <location>
        <position position="269"/>
    </location>
</feature>
<reference key="1">
    <citation type="journal article" date="2010" name="BMC Genomics">
        <title>Salmo salar and Esox lucius full-length cDNA sequences reveal changes in evolutionary pressures on a post-tetraploidization genome.</title>
        <authorList>
            <person name="Leong J.S."/>
            <person name="Jantzen S.G."/>
            <person name="von Schalburg K.R."/>
            <person name="Cooper G.A."/>
            <person name="Messmer A.M."/>
            <person name="Liao N.Y."/>
            <person name="Munro S."/>
            <person name="Moore R."/>
            <person name="Holt R.A."/>
            <person name="Jones S.J."/>
            <person name="Davidson W.S."/>
            <person name="Koop B.F."/>
        </authorList>
    </citation>
    <scope>NUCLEOTIDE SEQUENCE [LARGE SCALE MRNA]</scope>
    <source>
        <tissue>Brain</tissue>
    </source>
</reference>
<proteinExistence type="evidence at transcript level"/>
<comment type="function">
    <text evidence="1">Catalyzes the hydrolysis of N-formyl-L-kynurenine to L-kynurenine, the second step in the kynurenine pathway of tryptophan degradation. Kynurenine may be further oxidized to nicotinic acid, NAD(H) and NADP(H). Required for elimination of toxic metabolites.</text>
</comment>
<comment type="catalytic activity">
    <reaction evidence="1">
        <text>N-formyl-L-kynurenine + H2O = L-kynurenine + formate + H(+)</text>
        <dbReference type="Rhea" id="RHEA:13009"/>
        <dbReference type="ChEBI" id="CHEBI:15377"/>
        <dbReference type="ChEBI" id="CHEBI:15378"/>
        <dbReference type="ChEBI" id="CHEBI:15740"/>
        <dbReference type="ChEBI" id="CHEBI:57959"/>
        <dbReference type="ChEBI" id="CHEBI:58629"/>
        <dbReference type="EC" id="3.5.1.9"/>
    </reaction>
</comment>
<comment type="pathway">
    <text evidence="1">Amino-acid degradation; L-tryptophan degradation via kynurenine pathway; L-kynurenine from L-tryptophan: step 2/2.</text>
</comment>
<comment type="subunit">
    <text evidence="1">Homodimer.</text>
</comment>
<comment type="subcellular location">
    <subcellularLocation>
        <location evidence="1">Cytoplasm</location>
        <location evidence="1">Cytosol</location>
    </subcellularLocation>
    <subcellularLocation>
        <location evidence="1">Nucleus</location>
    </subcellularLocation>
</comment>
<comment type="domain">
    <text evidence="1">The main chain amide nitrogen atoms of the second glycine and its adjacent residue in the HGGXW motif define the oxyanion hole, and stabilize the oxyanion that forms during the nucleophilic attack by the catalytic serine during substrate cleavage.</text>
</comment>
<comment type="similarity">
    <text evidence="1">Belongs to the kynurenine formamidase family.</text>
</comment>
<protein>
    <recommendedName>
        <fullName evidence="1">Kynurenine formamidase</fullName>
        <shortName evidence="1">KFA</shortName>
        <shortName evidence="1">KFase</shortName>
        <ecNumber evidence="1">3.5.1.9</ecNumber>
    </recommendedName>
    <alternativeName>
        <fullName evidence="1">Arylformamidase</fullName>
    </alternativeName>
    <alternativeName>
        <fullName evidence="1">N-formylkynurenine formamidase</fullName>
        <shortName evidence="1">FKF</shortName>
    </alternativeName>
</protein>